<sequence>MDLLNVVYIINFILLLLAAITDIKERIIPHKYTIAMIIINLVVGYYYFGFNAIIAFFSTLILCLILSIGMGGGDVKLFTALAPIFAYPNSFVFYIPKYILYLIAISMFIAAVFPMYKILMRYWKDIIPSACYLTMMLGILYYFINIYEIPYASIIIWAYIVLSIFVSRKVPKYKEYTKKLGYLFPAYLLFLYIIDTTYFIKYNVLLTSIIYLCEIILISIVIYALTGVETSDKKHIEELKEGDILRDVIIIDKDGVEVKNLNIMKRIKFLLEHEIKENEKEIILTDGEGLSNEDIRKIKKLYMEGKIPDKLNVIKTYPFVPFVVIGYVIVLMLMKLAII</sequence>
<keyword id="KW-1003">Cell membrane</keyword>
<keyword id="KW-0378">Hydrolase</keyword>
<keyword id="KW-0472">Membrane</keyword>
<keyword id="KW-0645">Protease</keyword>
<keyword id="KW-1185">Reference proteome</keyword>
<keyword id="KW-0812">Transmembrane</keyword>
<keyword id="KW-1133">Transmembrane helix</keyword>
<proteinExistence type="inferred from homology"/>
<organism>
    <name type="scientific">Methanocaldococcus jannaschii (strain ATCC 43067 / DSM 2661 / JAL-1 / JCM 10045 / NBRC 100440)</name>
    <name type="common">Methanococcus jannaschii</name>
    <dbReference type="NCBI Taxonomy" id="243232"/>
    <lineage>
        <taxon>Archaea</taxon>
        <taxon>Methanobacteriati</taxon>
        <taxon>Methanobacteriota</taxon>
        <taxon>Methanomada group</taxon>
        <taxon>Methanococci</taxon>
        <taxon>Methanococcales</taxon>
        <taxon>Methanocaldococcaceae</taxon>
        <taxon>Methanocaldococcus</taxon>
    </lineage>
</organism>
<feature type="chain" id="PRO_0000107071" description="Prepilin peptidase EppA">
    <location>
        <begin position="1"/>
        <end position="339"/>
    </location>
</feature>
<feature type="transmembrane region" description="Helical" evidence="2">
    <location>
        <begin position="3"/>
        <end position="23"/>
    </location>
</feature>
<feature type="transmembrane region" description="Helical" evidence="2">
    <location>
        <begin position="27"/>
        <end position="47"/>
    </location>
</feature>
<feature type="transmembrane region" description="Helical" evidence="2">
    <location>
        <begin position="48"/>
        <end position="68"/>
    </location>
</feature>
<feature type="transmembrane region" description="Helical" evidence="2">
    <location>
        <begin position="75"/>
        <end position="95"/>
    </location>
</feature>
<feature type="transmembrane region" description="Helical" evidence="2">
    <location>
        <begin position="99"/>
        <end position="119"/>
    </location>
</feature>
<feature type="transmembrane region" description="Helical" evidence="2">
    <location>
        <begin position="125"/>
        <end position="145"/>
    </location>
</feature>
<feature type="transmembrane region" description="Helical" evidence="2">
    <location>
        <begin position="146"/>
        <end position="166"/>
    </location>
</feature>
<feature type="transmembrane region" description="Helical" evidence="2">
    <location>
        <begin position="180"/>
        <end position="200"/>
    </location>
</feature>
<feature type="transmembrane region" description="Helical" evidence="2">
    <location>
        <begin position="204"/>
        <end position="224"/>
    </location>
</feature>
<feature type="transmembrane region" description="Helical" evidence="2">
    <location>
        <begin position="319"/>
        <end position="339"/>
    </location>
</feature>
<accession>P81324</accession>
<name>EPPA_METJA</name>
<gene>
    <name evidence="1" type="primary">eppA</name>
    <name type="ordered locus">MJ0835.2</name>
</gene>
<reference key="1">
    <citation type="journal article" date="1996" name="Science">
        <title>Complete genome sequence of the methanogenic archaeon, Methanococcus jannaschii.</title>
        <authorList>
            <person name="Bult C.J."/>
            <person name="White O."/>
            <person name="Olsen G.J."/>
            <person name="Zhou L."/>
            <person name="Fleischmann R.D."/>
            <person name="Sutton G.G."/>
            <person name="Blake J.A."/>
            <person name="FitzGerald L.M."/>
            <person name="Clayton R.A."/>
            <person name="Gocayne J.D."/>
            <person name="Kerlavage A.R."/>
            <person name="Dougherty B.A."/>
            <person name="Tomb J.-F."/>
            <person name="Adams M.D."/>
            <person name="Reich C.I."/>
            <person name="Overbeek R."/>
            <person name="Kirkness E.F."/>
            <person name="Weinstock K.G."/>
            <person name="Merrick J.M."/>
            <person name="Glodek A."/>
            <person name="Scott J.L."/>
            <person name="Geoghagen N.S.M."/>
            <person name="Weidman J.F."/>
            <person name="Fuhrmann J.L."/>
            <person name="Nguyen D."/>
            <person name="Utterback T.R."/>
            <person name="Kelley J.M."/>
            <person name="Peterson J.D."/>
            <person name="Sadow P.W."/>
            <person name="Hanna M.C."/>
            <person name="Cotton M.D."/>
            <person name="Roberts K.M."/>
            <person name="Hurst M.A."/>
            <person name="Kaine B.P."/>
            <person name="Borodovsky M."/>
            <person name="Klenk H.-P."/>
            <person name="Fraser C.M."/>
            <person name="Smith H.O."/>
            <person name="Woese C.R."/>
            <person name="Venter J.C."/>
        </authorList>
    </citation>
    <scope>NUCLEOTIDE SEQUENCE [LARGE SCALE GENOMIC DNA]</scope>
    <source>
        <strain>ATCC 43067 / DSM 2661 / JAL-1 / JCM 10045 / NBRC 100440</strain>
    </source>
</reference>
<dbReference type="EC" id="3.4.-.-" evidence="1"/>
<dbReference type="EMBL" id="L77117">
    <property type="protein sequence ID" value="AAB98835.1"/>
    <property type="molecule type" value="Genomic_DNA"/>
</dbReference>
<dbReference type="RefSeq" id="WP_010870349.1">
    <property type="nucleotide sequence ID" value="NC_000909.1"/>
</dbReference>
<dbReference type="FunCoup" id="P81324">
    <property type="interactions" value="2"/>
</dbReference>
<dbReference type="STRING" id="243232.MJ_0835.2"/>
<dbReference type="MEROPS" id="A24.018"/>
<dbReference type="PaxDb" id="243232-MJ_0835.2"/>
<dbReference type="EnsemblBacteria" id="AAB98835">
    <property type="protein sequence ID" value="AAB98835"/>
    <property type="gene ID" value="MJ_0835.2"/>
</dbReference>
<dbReference type="GeneID" id="1451721"/>
<dbReference type="KEGG" id="mja:MJ_0835.2"/>
<dbReference type="eggNOG" id="arCOG02300">
    <property type="taxonomic scope" value="Archaea"/>
</dbReference>
<dbReference type="HOGENOM" id="CLU_805645_0_0_2"/>
<dbReference type="InParanoid" id="P81324"/>
<dbReference type="OrthoDB" id="65749at2157"/>
<dbReference type="PhylomeDB" id="P81324"/>
<dbReference type="Proteomes" id="UP000000805">
    <property type="component" value="Chromosome"/>
</dbReference>
<dbReference type="GO" id="GO:0005886">
    <property type="term" value="C:plasma membrane"/>
    <property type="evidence" value="ECO:0007669"/>
    <property type="project" value="UniProtKB-SubCell"/>
</dbReference>
<dbReference type="GO" id="GO:0004190">
    <property type="term" value="F:aspartic-type endopeptidase activity"/>
    <property type="evidence" value="ECO:0007669"/>
    <property type="project" value="InterPro"/>
</dbReference>
<dbReference type="Gene3D" id="1.20.120.1220">
    <property type="match status" value="1"/>
</dbReference>
<dbReference type="InterPro" id="IPR009639">
    <property type="entry name" value="Pept_A24A_C_arc"/>
</dbReference>
<dbReference type="InterPro" id="IPR000045">
    <property type="entry name" value="Prepilin_IV_endopep_pep"/>
</dbReference>
<dbReference type="Pfam" id="PF06819">
    <property type="entry name" value="Arc_PepC"/>
    <property type="match status" value="1"/>
</dbReference>
<dbReference type="Pfam" id="PF01478">
    <property type="entry name" value="Peptidase_A24"/>
    <property type="match status" value="1"/>
</dbReference>
<protein>
    <recommendedName>
        <fullName evidence="1">Prepilin peptidase EppA</fullName>
        <ecNumber evidence="1">3.4.-.-</ecNumber>
    </recommendedName>
    <alternativeName>
        <fullName evidence="1">Euryarchaeal type IV prepilin peptidase</fullName>
    </alternativeName>
</protein>
<comment type="function">
    <text evidence="1">Peptidase that processes the N-terminus of prepilins.</text>
</comment>
<comment type="subcellular location">
    <subcellularLocation>
        <location evidence="3">Cell membrane</location>
        <topology evidence="2">Multi-pass membrane protein</topology>
    </subcellularLocation>
</comment>
<comment type="similarity">
    <text evidence="3">Belongs to the peptidase A24 family.</text>
</comment>
<evidence type="ECO:0000250" key="1">
    <source>
        <dbReference type="UniProtKB" id="Q6M0N8"/>
    </source>
</evidence>
<evidence type="ECO:0000255" key="2"/>
<evidence type="ECO:0000305" key="3"/>